<reference key="1">
    <citation type="journal article" date="2002" name="Nature">
        <title>Genome sequence of the plant pathogen Ralstonia solanacearum.</title>
        <authorList>
            <person name="Salanoubat M."/>
            <person name="Genin S."/>
            <person name="Artiguenave F."/>
            <person name="Gouzy J."/>
            <person name="Mangenot S."/>
            <person name="Arlat M."/>
            <person name="Billault A."/>
            <person name="Brottier P."/>
            <person name="Camus J.-C."/>
            <person name="Cattolico L."/>
            <person name="Chandler M."/>
            <person name="Choisne N."/>
            <person name="Claudel-Renard C."/>
            <person name="Cunnac S."/>
            <person name="Demange N."/>
            <person name="Gaspin C."/>
            <person name="Lavie M."/>
            <person name="Moisan A."/>
            <person name="Robert C."/>
            <person name="Saurin W."/>
            <person name="Schiex T."/>
            <person name="Siguier P."/>
            <person name="Thebault P."/>
            <person name="Whalen M."/>
            <person name="Wincker P."/>
            <person name="Levy M."/>
            <person name="Weissenbach J."/>
            <person name="Boucher C.A."/>
        </authorList>
    </citation>
    <scope>NUCLEOTIDE SEQUENCE [LARGE SCALE GENOMIC DNA]</scope>
    <source>
        <strain>ATCC BAA-1114 / GMI1000</strain>
    </source>
</reference>
<dbReference type="EC" id="7.5.2.11" evidence="1"/>
<dbReference type="EC" id="7.5.2.7" evidence="1"/>
<dbReference type="EMBL" id="AL646052">
    <property type="protein sequence ID" value="CAD14944.1"/>
    <property type="molecule type" value="Genomic_DNA"/>
</dbReference>
<dbReference type="SMR" id="Q8Y003"/>
<dbReference type="STRING" id="267608.RSc1242"/>
<dbReference type="EnsemblBacteria" id="CAD14944">
    <property type="protein sequence ID" value="CAD14944"/>
    <property type="gene ID" value="RSc1242"/>
</dbReference>
<dbReference type="KEGG" id="rso:RSc1242"/>
<dbReference type="PATRIC" id="fig|267608.8.peg.1262"/>
<dbReference type="eggNOG" id="COG1129">
    <property type="taxonomic scope" value="Bacteria"/>
</dbReference>
<dbReference type="HOGENOM" id="CLU_000604_92_3_4"/>
<dbReference type="Proteomes" id="UP000001436">
    <property type="component" value="Chromosome"/>
</dbReference>
<dbReference type="GO" id="GO:0005886">
    <property type="term" value="C:plasma membrane"/>
    <property type="evidence" value="ECO:0007669"/>
    <property type="project" value="UniProtKB-SubCell"/>
</dbReference>
<dbReference type="GO" id="GO:0015611">
    <property type="term" value="F:ABC-type D-ribose transporter activity"/>
    <property type="evidence" value="ECO:0007669"/>
    <property type="project" value="UniProtKB-EC"/>
</dbReference>
<dbReference type="GO" id="GO:0005524">
    <property type="term" value="F:ATP binding"/>
    <property type="evidence" value="ECO:0007669"/>
    <property type="project" value="UniProtKB-KW"/>
</dbReference>
<dbReference type="GO" id="GO:0016887">
    <property type="term" value="F:ATP hydrolysis activity"/>
    <property type="evidence" value="ECO:0007669"/>
    <property type="project" value="InterPro"/>
</dbReference>
<dbReference type="CDD" id="cd03216">
    <property type="entry name" value="ABC_Carb_Monos_I"/>
    <property type="match status" value="1"/>
</dbReference>
<dbReference type="CDD" id="cd03215">
    <property type="entry name" value="ABC_Carb_Monos_II"/>
    <property type="match status" value="1"/>
</dbReference>
<dbReference type="FunFam" id="3.40.50.300:FF:000127">
    <property type="entry name" value="Ribose import ATP-binding protein RbsA"/>
    <property type="match status" value="1"/>
</dbReference>
<dbReference type="Gene3D" id="3.40.50.300">
    <property type="entry name" value="P-loop containing nucleotide triphosphate hydrolases"/>
    <property type="match status" value="2"/>
</dbReference>
<dbReference type="InterPro" id="IPR003593">
    <property type="entry name" value="AAA+_ATPase"/>
</dbReference>
<dbReference type="InterPro" id="IPR050107">
    <property type="entry name" value="ABC_carbohydrate_import_ATPase"/>
</dbReference>
<dbReference type="InterPro" id="IPR003439">
    <property type="entry name" value="ABC_transporter-like_ATP-bd"/>
</dbReference>
<dbReference type="InterPro" id="IPR017871">
    <property type="entry name" value="ABC_transporter-like_CS"/>
</dbReference>
<dbReference type="InterPro" id="IPR027417">
    <property type="entry name" value="P-loop_NTPase"/>
</dbReference>
<dbReference type="PANTHER" id="PTHR43790">
    <property type="entry name" value="CARBOHYDRATE TRANSPORT ATP-BINDING PROTEIN MG119-RELATED"/>
    <property type="match status" value="1"/>
</dbReference>
<dbReference type="PANTHER" id="PTHR43790:SF7">
    <property type="entry name" value="GALACTOSE_METHYL GALACTOSIDE IMPORT ATP-BINDING PROTEIN MGLA"/>
    <property type="match status" value="1"/>
</dbReference>
<dbReference type="Pfam" id="PF00005">
    <property type="entry name" value="ABC_tran"/>
    <property type="match status" value="2"/>
</dbReference>
<dbReference type="SMART" id="SM00382">
    <property type="entry name" value="AAA"/>
    <property type="match status" value="2"/>
</dbReference>
<dbReference type="SUPFAM" id="SSF52540">
    <property type="entry name" value="P-loop containing nucleoside triphosphate hydrolases"/>
    <property type="match status" value="2"/>
</dbReference>
<dbReference type="PROSITE" id="PS00211">
    <property type="entry name" value="ABC_TRANSPORTER_1"/>
    <property type="match status" value="1"/>
</dbReference>
<dbReference type="PROSITE" id="PS50893">
    <property type="entry name" value="ABC_TRANSPORTER_2"/>
    <property type="match status" value="2"/>
</dbReference>
<dbReference type="PROSITE" id="PS51260">
    <property type="entry name" value="MGLA"/>
    <property type="match status" value="1"/>
</dbReference>
<dbReference type="PROSITE" id="PS51254">
    <property type="entry name" value="RBSA"/>
    <property type="match status" value="1"/>
</dbReference>
<feature type="chain" id="PRO_0000262986" description="Putative ribose/galactose/methyl galactoside import ATP-binding protein">
    <location>
        <begin position="1"/>
        <end position="518"/>
    </location>
</feature>
<feature type="domain" description="ABC transporter 1" evidence="1">
    <location>
        <begin position="29"/>
        <end position="265"/>
    </location>
</feature>
<feature type="domain" description="ABC transporter 2" evidence="1">
    <location>
        <begin position="275"/>
        <end position="515"/>
    </location>
</feature>
<feature type="region of interest" description="Disordered" evidence="2">
    <location>
        <begin position="1"/>
        <end position="22"/>
    </location>
</feature>
<feature type="compositionally biased region" description="Polar residues" evidence="2">
    <location>
        <begin position="12"/>
        <end position="22"/>
    </location>
</feature>
<feature type="binding site" evidence="1">
    <location>
        <begin position="61"/>
        <end position="68"/>
    </location>
    <ligand>
        <name>ATP</name>
        <dbReference type="ChEBI" id="CHEBI:30616"/>
    </ligand>
</feature>
<keyword id="KW-0067">ATP-binding</keyword>
<keyword id="KW-0997">Cell inner membrane</keyword>
<keyword id="KW-1003">Cell membrane</keyword>
<keyword id="KW-0472">Membrane</keyword>
<keyword id="KW-0547">Nucleotide-binding</keyword>
<keyword id="KW-1185">Reference proteome</keyword>
<keyword id="KW-0677">Repeat</keyword>
<keyword id="KW-0762">Sugar transport</keyword>
<keyword id="KW-1278">Translocase</keyword>
<keyword id="KW-0813">Transport</keyword>
<protein>
    <recommendedName>
        <fullName evidence="1">Putative ribose/galactose/methyl galactoside import ATP-binding protein</fullName>
        <ecNumber evidence="1">7.5.2.11</ecNumber>
        <ecNumber evidence="1">7.5.2.7</ecNumber>
    </recommendedName>
</protein>
<sequence>MSIAVLDRPMSRQDTPSASSVPSACDCMLEVRGVGKSFPGVVALDDVRLRVRRGTVHALMGENGAGKSTLMKIIAGVHAPDRGEIRLKGEPVVLHGPLDALNRGIAMIHQELNLMPYMTVAENIWIRREPRNRCGLVDHAELRRRTQALFARLAIDIDPEAEVRTLTVASRQMVEIAKAVSFDSEVLIMDEPTSALSDVEVHHLFRIIRQLREQGKGIVYITHKMDELFEIADEFSVFRDGKSIGTHAASDVTRDDIIRMMVGREITQMFPKADVPIGDVVLSVKNLCLHGVFRDVSFDLRAGEILGVAGLVGSGRSNVAEALFGVVPASSGEIRLDGERVSIRTPAQAMRYGMAFLTEDRKDTGCFLNLDLLANMEAAVLQRHYMTCGFVRRGALKQDCEAMSRTLRVKSPGLHEEIQNLSGGNQQKVLIGRWLLTHPRILILDEPTRGIDVGAKAEIHRLVSALAGEGVAVLMISSEMPEVLGMSDRIMVMHEGRVTGIVDRKDASQVRVMELASR</sequence>
<name>RGMG_RALN1</name>
<accession>Q8Y003</accession>
<comment type="function">
    <text evidence="1">Part of an ABC transporter complex involved in carbohydrate import. Could be involved in ribose, galactose and/or methyl galactoside import. Responsible for energy coupling to the transport system.</text>
</comment>
<comment type="catalytic activity">
    <reaction evidence="1">
        <text>D-ribose(out) + ATP + H2O = D-ribose(in) + ADP + phosphate + H(+)</text>
        <dbReference type="Rhea" id="RHEA:29903"/>
        <dbReference type="ChEBI" id="CHEBI:15377"/>
        <dbReference type="ChEBI" id="CHEBI:15378"/>
        <dbReference type="ChEBI" id="CHEBI:30616"/>
        <dbReference type="ChEBI" id="CHEBI:43474"/>
        <dbReference type="ChEBI" id="CHEBI:47013"/>
        <dbReference type="ChEBI" id="CHEBI:456216"/>
        <dbReference type="EC" id="7.5.2.7"/>
    </reaction>
</comment>
<comment type="catalytic activity">
    <reaction evidence="1">
        <text>D-galactose(out) + ATP + H2O = D-galactose(in) + ADP + phosphate + H(+)</text>
        <dbReference type="Rhea" id="RHEA:60156"/>
        <dbReference type="ChEBI" id="CHEBI:4139"/>
        <dbReference type="ChEBI" id="CHEBI:15377"/>
        <dbReference type="ChEBI" id="CHEBI:15378"/>
        <dbReference type="ChEBI" id="CHEBI:30616"/>
        <dbReference type="ChEBI" id="CHEBI:43474"/>
        <dbReference type="ChEBI" id="CHEBI:456216"/>
        <dbReference type="EC" id="7.5.2.11"/>
    </reaction>
</comment>
<comment type="subcellular location">
    <subcellularLocation>
        <location evidence="1">Cell inner membrane</location>
        <topology evidence="1">Peripheral membrane protein</topology>
    </subcellularLocation>
</comment>
<comment type="similarity">
    <text evidence="1">Belongs to the ABC transporter superfamily. Carbohydrate importer 2 (CUT2) (TC 3.A.1.2) family.</text>
</comment>
<proteinExistence type="inferred from homology"/>
<evidence type="ECO:0000255" key="1">
    <source>
        <dbReference type="HAMAP-Rule" id="MF_01717"/>
    </source>
</evidence>
<evidence type="ECO:0000256" key="2">
    <source>
        <dbReference type="SAM" id="MobiDB-lite"/>
    </source>
</evidence>
<gene>
    <name type="ordered locus">RSc1242</name>
</gene>
<organism>
    <name type="scientific">Ralstonia nicotianae (strain ATCC BAA-1114 / GMI1000)</name>
    <name type="common">Ralstonia solanacearum</name>
    <dbReference type="NCBI Taxonomy" id="267608"/>
    <lineage>
        <taxon>Bacteria</taxon>
        <taxon>Pseudomonadati</taxon>
        <taxon>Pseudomonadota</taxon>
        <taxon>Betaproteobacteria</taxon>
        <taxon>Burkholderiales</taxon>
        <taxon>Burkholderiaceae</taxon>
        <taxon>Ralstonia</taxon>
        <taxon>Ralstonia solanacearum species complex</taxon>
    </lineage>
</organism>